<feature type="chain" id="PRO_0000458582" description="Small ribosomal subunit protein bS21m">
    <location>
        <begin position="1"/>
        <end position="236"/>
    </location>
</feature>
<feature type="region of interest" description="Disordered" evidence="1">
    <location>
        <begin position="65"/>
        <end position="136"/>
    </location>
</feature>
<feature type="compositionally biased region" description="Low complexity" evidence="1">
    <location>
        <begin position="107"/>
        <end position="131"/>
    </location>
</feature>
<comment type="function">
    <text evidence="5">Component of the mitochondrial ribosome (mitoribosome), a dedicated translation machinery responsible for the synthesis of mitochondrial genome-encoded proteins, including at least some of the essential transmembrane subunits of the mitochondrial respiratory chain. The mitoribosomes are attached to the mitochondrial inner membrane and translation products are cotranslationally integrated into the membrane.</text>
</comment>
<comment type="subunit">
    <text evidence="2">Component of the mitochondrial small ribosomal subunit (mt-SSU). Mature N.crassa 74S mitochondrial ribosomes consist of a small (37S) and a large (54S) subunit. The 37S small subunit contains a 16S ribosomal RNA (16S mt-rRNA) and 32 different proteins. The 54S large subunit contains a 23S rRNA (23S mt-rRNA) and 42 different proteins.</text>
</comment>
<comment type="subcellular location">
    <subcellularLocation>
        <location evidence="2">Mitochondrion</location>
    </subcellularLocation>
</comment>
<comment type="similarity">
    <text evidence="4">Belongs to the bacterial ribosomal protein bS21 family.</text>
</comment>
<accession>Q7SAJ1</accession>
<protein>
    <recommendedName>
        <fullName evidence="3">Small ribosomal subunit protein bS21m</fullName>
    </recommendedName>
</protein>
<keyword id="KW-0002">3D-structure</keyword>
<keyword id="KW-0496">Mitochondrion</keyword>
<keyword id="KW-1185">Reference proteome</keyword>
<keyword id="KW-0687">Ribonucleoprotein</keyword>
<keyword id="KW-0689">Ribosomal protein</keyword>
<name>RT21_NEUCR</name>
<organism>
    <name type="scientific">Neurospora crassa (strain ATCC 24698 / 74-OR23-1A / CBS 708.71 / DSM 1257 / FGSC 987)</name>
    <dbReference type="NCBI Taxonomy" id="367110"/>
    <lineage>
        <taxon>Eukaryota</taxon>
        <taxon>Fungi</taxon>
        <taxon>Dikarya</taxon>
        <taxon>Ascomycota</taxon>
        <taxon>Pezizomycotina</taxon>
        <taxon>Sordariomycetes</taxon>
        <taxon>Sordariomycetidae</taxon>
        <taxon>Sordariales</taxon>
        <taxon>Sordariaceae</taxon>
        <taxon>Neurospora</taxon>
    </lineage>
</organism>
<gene>
    <name type="primary">mrp21</name>
    <name type="ORF">NCU06958</name>
</gene>
<proteinExistence type="evidence at protein level"/>
<reference key="1">
    <citation type="journal article" date="2003" name="Nature">
        <title>The genome sequence of the filamentous fungus Neurospora crassa.</title>
        <authorList>
            <person name="Galagan J.E."/>
            <person name="Calvo S.E."/>
            <person name="Borkovich K.A."/>
            <person name="Selker E.U."/>
            <person name="Read N.D."/>
            <person name="Jaffe D.B."/>
            <person name="FitzHugh W."/>
            <person name="Ma L.-J."/>
            <person name="Smirnov S."/>
            <person name="Purcell S."/>
            <person name="Rehman B."/>
            <person name="Elkins T."/>
            <person name="Engels R."/>
            <person name="Wang S."/>
            <person name="Nielsen C.B."/>
            <person name="Butler J."/>
            <person name="Endrizzi M."/>
            <person name="Qui D."/>
            <person name="Ianakiev P."/>
            <person name="Bell-Pedersen D."/>
            <person name="Nelson M.A."/>
            <person name="Werner-Washburne M."/>
            <person name="Selitrennikoff C.P."/>
            <person name="Kinsey J.A."/>
            <person name="Braun E.L."/>
            <person name="Zelter A."/>
            <person name="Schulte U."/>
            <person name="Kothe G.O."/>
            <person name="Jedd G."/>
            <person name="Mewes H.-W."/>
            <person name="Staben C."/>
            <person name="Marcotte E."/>
            <person name="Greenberg D."/>
            <person name="Roy A."/>
            <person name="Foley K."/>
            <person name="Naylor J."/>
            <person name="Stange-Thomann N."/>
            <person name="Barrett R."/>
            <person name="Gnerre S."/>
            <person name="Kamal M."/>
            <person name="Kamvysselis M."/>
            <person name="Mauceli E.W."/>
            <person name="Bielke C."/>
            <person name="Rudd S."/>
            <person name="Frishman D."/>
            <person name="Krystofova S."/>
            <person name="Rasmussen C."/>
            <person name="Metzenberg R.L."/>
            <person name="Perkins D.D."/>
            <person name="Kroken S."/>
            <person name="Cogoni C."/>
            <person name="Macino G."/>
            <person name="Catcheside D.E.A."/>
            <person name="Li W."/>
            <person name="Pratt R.J."/>
            <person name="Osmani S.A."/>
            <person name="DeSouza C.P.C."/>
            <person name="Glass N.L."/>
            <person name="Orbach M.J."/>
            <person name="Berglund J.A."/>
            <person name="Voelker R."/>
            <person name="Yarden O."/>
            <person name="Plamann M."/>
            <person name="Seiler S."/>
            <person name="Dunlap J.C."/>
            <person name="Radford A."/>
            <person name="Aramayo R."/>
            <person name="Natvig D.O."/>
            <person name="Alex L.A."/>
            <person name="Mannhaupt G."/>
            <person name="Ebbole D.J."/>
            <person name="Freitag M."/>
            <person name="Paulsen I."/>
            <person name="Sachs M.S."/>
            <person name="Lander E.S."/>
            <person name="Nusbaum C."/>
            <person name="Birren B.W."/>
        </authorList>
    </citation>
    <scope>NUCLEOTIDE SEQUENCE [LARGE SCALE GENOMIC DNA]</scope>
    <source>
        <strain>ATCC 24698 / 74-OR23-1A / CBS 708.71 / DSM 1257 / FGSC 987</strain>
    </source>
</reference>
<reference evidence="6 7" key="2">
    <citation type="journal article" date="2020" name="Nat. Commun.">
        <title>Analysis of translating mitoribosome reveals functional characteristics of translation in mitochondria of fungi.</title>
        <authorList>
            <person name="Itoh Y."/>
            <person name="Naschberger A."/>
            <person name="Mortezaei N."/>
            <person name="Herrmann J.M."/>
            <person name="Amunts A."/>
        </authorList>
    </citation>
    <scope>STRUCTURE BY ELECTRON MICROSCOPY (2.85 ANGSTROMS)</scope>
</reference>
<sequence>MELRSALQSVCRTTAAAASASARSSLAGRHAFSTSARFQLQPPPNPYVSGKSRIETLRAALSNRKPAAGAAAGGSPGATSASSALPPRPPTANDSPWSIVDAINKDSNSSTSSSSSSSSSGGALYSSSKPSPMQTWNETDFETRHMAPQQELNIRLRPSTGRTFYVSGHQDFAGALKLLHRTVAANKVKKDVRLQRFHERPALKRKRNLRERWRARFKEGFKAAVNRTFELKNQGW</sequence>
<evidence type="ECO:0000256" key="1">
    <source>
        <dbReference type="SAM" id="MobiDB-lite"/>
    </source>
</evidence>
<evidence type="ECO:0000269" key="2">
    <source>
    </source>
</evidence>
<evidence type="ECO:0000303" key="3">
    <source>
    </source>
</evidence>
<evidence type="ECO:0000305" key="4"/>
<evidence type="ECO:0000305" key="5">
    <source>
    </source>
</evidence>
<evidence type="ECO:0007744" key="6">
    <source>
        <dbReference type="PDB" id="6YW5"/>
    </source>
</evidence>
<evidence type="ECO:0007744" key="7">
    <source>
        <dbReference type="PDB" id="6YWX"/>
    </source>
</evidence>
<dbReference type="EMBL" id="CM002239">
    <property type="protein sequence ID" value="EAA33362.1"/>
    <property type="molecule type" value="Genomic_DNA"/>
</dbReference>
<dbReference type="RefSeq" id="XP_962598.1">
    <property type="nucleotide sequence ID" value="XM_957505.2"/>
</dbReference>
<dbReference type="PDB" id="6YW5">
    <property type="method" value="EM"/>
    <property type="resolution" value="2.85 A"/>
    <property type="chains" value="TT=1-236"/>
</dbReference>
<dbReference type="PDB" id="6YWX">
    <property type="method" value="EM"/>
    <property type="resolution" value="3.10 A"/>
    <property type="chains" value="TT=1-236"/>
</dbReference>
<dbReference type="PDBsum" id="6YW5"/>
<dbReference type="PDBsum" id="6YWX"/>
<dbReference type="EMDB" id="EMD-10958"/>
<dbReference type="EMDB" id="EMD-10978"/>
<dbReference type="SMR" id="Q7SAJ1"/>
<dbReference type="STRING" id="367110.Q7SAJ1"/>
<dbReference type="PaxDb" id="5141-EFNCRP00000007064"/>
<dbReference type="EnsemblFungi" id="EAA33362">
    <property type="protein sequence ID" value="EAA33362"/>
    <property type="gene ID" value="NCU06958"/>
</dbReference>
<dbReference type="GeneID" id="3878746"/>
<dbReference type="KEGG" id="ncr:NCU06958"/>
<dbReference type="VEuPathDB" id="FungiDB:NCU06958"/>
<dbReference type="HOGENOM" id="CLU_081623_0_0_1"/>
<dbReference type="InParanoid" id="Q7SAJ1"/>
<dbReference type="OMA" id="QKFHIRR"/>
<dbReference type="OrthoDB" id="2501249at2759"/>
<dbReference type="Proteomes" id="UP000001805">
    <property type="component" value="Chromosome 4, Linkage Group IV"/>
</dbReference>
<dbReference type="GO" id="GO:0005739">
    <property type="term" value="C:mitochondrion"/>
    <property type="evidence" value="ECO:0007669"/>
    <property type="project" value="UniProtKB-SubCell"/>
</dbReference>
<dbReference type="GO" id="GO:1990904">
    <property type="term" value="C:ribonucleoprotein complex"/>
    <property type="evidence" value="ECO:0007669"/>
    <property type="project" value="UniProtKB-KW"/>
</dbReference>
<dbReference type="GO" id="GO:0005840">
    <property type="term" value="C:ribosome"/>
    <property type="evidence" value="ECO:0007669"/>
    <property type="project" value="UniProtKB-KW"/>
</dbReference>
<dbReference type="GO" id="GO:0003735">
    <property type="term" value="F:structural constituent of ribosome"/>
    <property type="evidence" value="ECO:0007669"/>
    <property type="project" value="InterPro"/>
</dbReference>
<dbReference type="GO" id="GO:0006412">
    <property type="term" value="P:translation"/>
    <property type="evidence" value="ECO:0007669"/>
    <property type="project" value="InterPro"/>
</dbReference>
<dbReference type="InterPro" id="IPR052837">
    <property type="entry name" value="Mitoribosomal_bS21"/>
</dbReference>
<dbReference type="InterPro" id="IPR001911">
    <property type="entry name" value="Ribosomal_bS21"/>
</dbReference>
<dbReference type="PANTHER" id="PTHR41237">
    <property type="entry name" value="37S RIBOSOMAL PROTEIN MRP21, MITOCHONDRIAL"/>
    <property type="match status" value="1"/>
</dbReference>
<dbReference type="PANTHER" id="PTHR41237:SF1">
    <property type="entry name" value="SMALL RIBOSOMAL SUBUNIT PROTEIN BS21M"/>
    <property type="match status" value="1"/>
</dbReference>
<dbReference type="Pfam" id="PF01165">
    <property type="entry name" value="Ribosomal_S21"/>
    <property type="match status" value="1"/>
</dbReference>